<organism>
    <name type="scientific">Synechococcus sp. (strain WH7803)</name>
    <dbReference type="NCBI Taxonomy" id="32051"/>
    <lineage>
        <taxon>Bacteria</taxon>
        <taxon>Bacillati</taxon>
        <taxon>Cyanobacteriota</taxon>
        <taxon>Cyanophyceae</taxon>
        <taxon>Synechococcales</taxon>
        <taxon>Synechococcaceae</taxon>
        <taxon>Synechococcus</taxon>
    </lineage>
</organism>
<name>RBL_SYNPW</name>
<keyword id="KW-1283">Bacterial microcompartment</keyword>
<keyword id="KW-0113">Calvin cycle</keyword>
<keyword id="KW-0120">Carbon dioxide fixation</keyword>
<keyword id="KW-1282">Carboxysome</keyword>
<keyword id="KW-0456">Lyase</keyword>
<keyword id="KW-0460">Magnesium</keyword>
<keyword id="KW-0479">Metal-binding</keyword>
<keyword id="KW-0503">Monooxygenase</keyword>
<keyword id="KW-0560">Oxidoreductase</keyword>
<keyword id="KW-0601">Photorespiration</keyword>
<keyword id="KW-0602">Photosynthesis</keyword>
<keyword id="KW-1185">Reference proteome</keyword>
<proteinExistence type="evidence at transcript level"/>
<accession>P96486</accession>
<accession>A5GJI9</accession>
<sequence>MSKKYDAGVKEYRDTYWTPDYVPLDTDLLACFKCTGQEGVPKEEVAAAVAAESSTGTWSTVWSELLTDLDFYKGRCYRIEDVPGDKESFYAFIAYPLDLFEEGSITNVLTSLVGNVFGFKALRHLRLEDIRFPMAFIKSCYGPPNGIQVERDRMNKYGRPLLGCTIKPKLGLSGKNYGRVVYECLRGGLDFTKDDENINSQPFQRWQNRFEFVAEAIKLSEQETGERKGHYLNVTANTPEEMYERAEFAKELGMPIIMHDFITGGFTANTGLSKWCRKNGMLLHIHRAMHAVIDRHPKHGIHFRVLAKCLRLSGGDQLHTGTVVGKLEGDRQTTLGYIDQLRESFVPEDRSRGNFFDQDWGSMPGVFAVASGGIHVWHMPALVTIFGDDSVLQFGGGTHGHPWGSAAGAAANRVALEACVKARNAGRHLEKESRDILMEAGKHSPELAIALETWKEIKFEFDTVDKLDVQN</sequence>
<evidence type="ECO:0000255" key="1">
    <source>
        <dbReference type="HAMAP-Rule" id="MF_01338"/>
    </source>
</evidence>
<evidence type="ECO:0000269" key="2">
    <source>
    </source>
</evidence>
<protein>
    <recommendedName>
        <fullName evidence="1">Ribulose bisphosphate carboxylase large chain</fullName>
        <shortName evidence="1">RuBisCO large subunit</shortName>
        <ecNumber evidence="1">4.1.1.39</ecNumber>
    </recommendedName>
</protein>
<gene>
    <name evidence="1" type="primary">cbbL</name>
    <name evidence="1" type="synonym">rbcL</name>
    <name type="ordered locus">SynWH7803_0678</name>
</gene>
<dbReference type="EC" id="4.1.1.39" evidence="1"/>
<dbReference type="EMBL" id="U46156">
    <property type="protein sequence ID" value="AAB48080.1"/>
    <property type="molecule type" value="Genomic_DNA"/>
</dbReference>
<dbReference type="EMBL" id="CT971583">
    <property type="protein sequence ID" value="CAK23104.1"/>
    <property type="molecule type" value="Genomic_DNA"/>
</dbReference>
<dbReference type="SMR" id="P96486"/>
<dbReference type="STRING" id="32051.SynWH7803_0678"/>
<dbReference type="KEGG" id="syx:SynWH7803_0678"/>
<dbReference type="eggNOG" id="COG1850">
    <property type="taxonomic scope" value="Bacteria"/>
</dbReference>
<dbReference type="HOGENOM" id="CLU_031450_2_0_3"/>
<dbReference type="OrthoDB" id="9770811at2"/>
<dbReference type="Proteomes" id="UP000001566">
    <property type="component" value="Chromosome"/>
</dbReference>
<dbReference type="GO" id="GO:0031470">
    <property type="term" value="C:carboxysome"/>
    <property type="evidence" value="ECO:0007669"/>
    <property type="project" value="UniProtKB-SubCell"/>
</dbReference>
<dbReference type="GO" id="GO:0000287">
    <property type="term" value="F:magnesium ion binding"/>
    <property type="evidence" value="ECO:0007669"/>
    <property type="project" value="UniProtKB-UniRule"/>
</dbReference>
<dbReference type="GO" id="GO:0004497">
    <property type="term" value="F:monooxygenase activity"/>
    <property type="evidence" value="ECO:0007669"/>
    <property type="project" value="UniProtKB-KW"/>
</dbReference>
<dbReference type="GO" id="GO:0016984">
    <property type="term" value="F:ribulose-bisphosphate carboxylase activity"/>
    <property type="evidence" value="ECO:0007669"/>
    <property type="project" value="UniProtKB-UniRule"/>
</dbReference>
<dbReference type="GO" id="GO:0009853">
    <property type="term" value="P:photorespiration"/>
    <property type="evidence" value="ECO:0007669"/>
    <property type="project" value="UniProtKB-KW"/>
</dbReference>
<dbReference type="GO" id="GO:0019253">
    <property type="term" value="P:reductive pentose-phosphate cycle"/>
    <property type="evidence" value="ECO:0007669"/>
    <property type="project" value="UniProtKB-UniRule"/>
</dbReference>
<dbReference type="Gene3D" id="3.20.20.110">
    <property type="entry name" value="Ribulose bisphosphate carboxylase, large subunit, C-terminal domain"/>
    <property type="match status" value="1"/>
</dbReference>
<dbReference type="Gene3D" id="3.30.70.150">
    <property type="entry name" value="RuBisCO large subunit, N-terminal domain"/>
    <property type="match status" value="1"/>
</dbReference>
<dbReference type="HAMAP" id="MF_01338">
    <property type="entry name" value="RuBisCO_L_type1"/>
    <property type="match status" value="1"/>
</dbReference>
<dbReference type="InterPro" id="IPR033966">
    <property type="entry name" value="RuBisCO"/>
</dbReference>
<dbReference type="InterPro" id="IPR020878">
    <property type="entry name" value="RuBisCo_large_chain_AS"/>
</dbReference>
<dbReference type="InterPro" id="IPR000685">
    <property type="entry name" value="RuBisCO_lsu_C"/>
</dbReference>
<dbReference type="InterPro" id="IPR036376">
    <property type="entry name" value="RuBisCO_lsu_C_sf"/>
</dbReference>
<dbReference type="InterPro" id="IPR017443">
    <property type="entry name" value="RuBisCO_lsu_fd_N"/>
</dbReference>
<dbReference type="InterPro" id="IPR036422">
    <property type="entry name" value="RuBisCO_lsu_N_sf"/>
</dbReference>
<dbReference type="InterPro" id="IPR020888">
    <property type="entry name" value="RuBisCO_lsuI"/>
</dbReference>
<dbReference type="NCBIfam" id="NF003252">
    <property type="entry name" value="PRK04208.1"/>
    <property type="match status" value="1"/>
</dbReference>
<dbReference type="PANTHER" id="PTHR42704">
    <property type="entry name" value="RIBULOSE BISPHOSPHATE CARBOXYLASE"/>
    <property type="match status" value="1"/>
</dbReference>
<dbReference type="PANTHER" id="PTHR42704:SF17">
    <property type="entry name" value="RIBULOSE BISPHOSPHATE CARBOXYLASE LARGE CHAIN"/>
    <property type="match status" value="1"/>
</dbReference>
<dbReference type="Pfam" id="PF00016">
    <property type="entry name" value="RuBisCO_large"/>
    <property type="match status" value="1"/>
</dbReference>
<dbReference type="Pfam" id="PF02788">
    <property type="entry name" value="RuBisCO_large_N"/>
    <property type="match status" value="1"/>
</dbReference>
<dbReference type="SFLD" id="SFLDG01052">
    <property type="entry name" value="RuBisCO"/>
    <property type="match status" value="1"/>
</dbReference>
<dbReference type="SFLD" id="SFLDS00014">
    <property type="entry name" value="RuBisCO"/>
    <property type="match status" value="1"/>
</dbReference>
<dbReference type="SFLD" id="SFLDG00301">
    <property type="entry name" value="RuBisCO-like_proteins"/>
    <property type="match status" value="1"/>
</dbReference>
<dbReference type="SUPFAM" id="SSF51649">
    <property type="entry name" value="RuBisCo, C-terminal domain"/>
    <property type="match status" value="1"/>
</dbReference>
<dbReference type="SUPFAM" id="SSF54966">
    <property type="entry name" value="RuBisCO, large subunit, small (N-terminal) domain"/>
    <property type="match status" value="1"/>
</dbReference>
<dbReference type="PROSITE" id="PS00157">
    <property type="entry name" value="RUBISCO_LARGE"/>
    <property type="match status" value="1"/>
</dbReference>
<feature type="chain" id="PRO_0000062652" description="Ribulose bisphosphate carboxylase large chain">
    <location>
        <begin position="1"/>
        <end position="471"/>
    </location>
</feature>
<feature type="active site" description="Proton acceptor" evidence="1">
    <location>
        <position position="167"/>
    </location>
</feature>
<feature type="active site" description="Proton acceptor" evidence="1">
    <location>
        <position position="286"/>
    </location>
</feature>
<feature type="binding site" description="in homodimeric partner" evidence="1">
    <location>
        <position position="115"/>
    </location>
    <ligand>
        <name>substrate</name>
    </ligand>
</feature>
<feature type="binding site" evidence="1">
    <location>
        <position position="165"/>
    </location>
    <ligand>
        <name>substrate</name>
    </ligand>
</feature>
<feature type="binding site" evidence="1">
    <location>
        <position position="169"/>
    </location>
    <ligand>
        <name>substrate</name>
    </ligand>
</feature>
<feature type="binding site" description="via carbamate group" evidence="1">
    <location>
        <position position="193"/>
    </location>
    <ligand>
        <name>Mg(2+)</name>
        <dbReference type="ChEBI" id="CHEBI:18420"/>
    </ligand>
</feature>
<feature type="binding site" evidence="1">
    <location>
        <position position="195"/>
    </location>
    <ligand>
        <name>Mg(2+)</name>
        <dbReference type="ChEBI" id="CHEBI:18420"/>
    </ligand>
</feature>
<feature type="binding site" evidence="1">
    <location>
        <position position="196"/>
    </location>
    <ligand>
        <name>Mg(2+)</name>
        <dbReference type="ChEBI" id="CHEBI:18420"/>
    </ligand>
</feature>
<feature type="binding site" evidence="1">
    <location>
        <position position="287"/>
    </location>
    <ligand>
        <name>substrate</name>
    </ligand>
</feature>
<feature type="binding site" evidence="1">
    <location>
        <position position="319"/>
    </location>
    <ligand>
        <name>substrate</name>
    </ligand>
</feature>
<feature type="binding site" evidence="1">
    <location>
        <position position="371"/>
    </location>
    <ligand>
        <name>substrate</name>
    </ligand>
</feature>
<feature type="site" description="Transition state stabilizer" evidence="1">
    <location>
        <position position="326"/>
    </location>
</feature>
<feature type="modified residue" description="N6-carboxylysine" evidence="1">
    <location>
        <position position="193"/>
    </location>
</feature>
<comment type="function">
    <text evidence="1">RuBisCO catalyzes two reactions: the carboxylation of D-ribulose 1,5-bisphosphate, the primary event in carbon dioxide fixation, as well as the oxidative fragmentation of the pentose substrate in the photorespiration process. Both reactions occur simultaneously and in competition at the same active site.</text>
</comment>
<comment type="catalytic activity">
    <reaction evidence="1">
        <text>2 (2R)-3-phosphoglycerate + 2 H(+) = D-ribulose 1,5-bisphosphate + CO2 + H2O</text>
        <dbReference type="Rhea" id="RHEA:23124"/>
        <dbReference type="ChEBI" id="CHEBI:15377"/>
        <dbReference type="ChEBI" id="CHEBI:15378"/>
        <dbReference type="ChEBI" id="CHEBI:16526"/>
        <dbReference type="ChEBI" id="CHEBI:57870"/>
        <dbReference type="ChEBI" id="CHEBI:58272"/>
        <dbReference type="EC" id="4.1.1.39"/>
    </reaction>
</comment>
<comment type="catalytic activity">
    <reaction evidence="1">
        <text>D-ribulose 1,5-bisphosphate + O2 = 2-phosphoglycolate + (2R)-3-phosphoglycerate + 2 H(+)</text>
        <dbReference type="Rhea" id="RHEA:36631"/>
        <dbReference type="ChEBI" id="CHEBI:15378"/>
        <dbReference type="ChEBI" id="CHEBI:15379"/>
        <dbReference type="ChEBI" id="CHEBI:57870"/>
        <dbReference type="ChEBI" id="CHEBI:58033"/>
        <dbReference type="ChEBI" id="CHEBI:58272"/>
    </reaction>
</comment>
<comment type="cofactor">
    <cofactor evidence="1">
        <name>Mg(2+)</name>
        <dbReference type="ChEBI" id="CHEBI:18420"/>
    </cofactor>
    <text evidence="1">Binds 1 Mg(2+) ion per subunit.</text>
</comment>
<comment type="subunit">
    <text evidence="1">Heterohexadecamer of 8 large chains and 8 small chains.</text>
</comment>
<comment type="subcellular location">
    <subcellularLocation>
        <location evidence="1">Carboxysome</location>
    </subcellularLocation>
</comment>
<comment type="induction">
    <text evidence="2">Transcribed during light cycle, reaching a peak after 6 hours of illumination, mRNA becomes undetectable during the dark. Part of the csoS1-ccbL-ccbS operon.</text>
</comment>
<comment type="miscellaneous">
    <text evidence="1">The basic functional RuBisCO is composed of a large chain homodimer in a 'head-to-tail' conformation. In form I RuBisCO this homodimer is arranged in a barrel-like tetramer with the small subunits forming a tetrameric 'cap' on each end of the 'barrel'.</text>
</comment>
<comment type="similarity">
    <text evidence="1">Belongs to the RuBisCO large chain family. Type I subfamily.</text>
</comment>
<reference key="1">
    <citation type="journal article" date="1996" name="Plant Mol. Biol.">
        <title>Regulation, unique gene organization, and unusual primary structure of carbon fixation genes from a marine phycoerythrin-containing cyanobacterium.</title>
        <authorList>
            <person name="Watson G.M."/>
            <person name="Tabita F.R."/>
        </authorList>
    </citation>
    <scope>NUCLEOTIDE SEQUENCE [GENOMIC DNA]</scope>
    <scope>INDUCTION</scope>
    <source>
        <strain>WH7803</strain>
    </source>
</reference>
<reference key="2">
    <citation type="submission" date="2006-05" db="EMBL/GenBank/DDBJ databases">
        <authorList>
            <consortium name="Genoscope"/>
        </authorList>
    </citation>
    <scope>NUCLEOTIDE SEQUENCE [LARGE SCALE GENOMIC DNA]</scope>
    <source>
        <strain>WH7803</strain>
    </source>
</reference>